<name>YWLB_BACSU</name>
<dbReference type="EMBL" id="Z38002">
    <property type="protein sequence ID" value="CAA86104.1"/>
    <property type="molecule type" value="Genomic_DNA"/>
</dbReference>
<dbReference type="EMBL" id="AL009126">
    <property type="protein sequence ID" value="CAB15713.1"/>
    <property type="molecule type" value="Genomic_DNA"/>
</dbReference>
<dbReference type="PIR" id="I40475">
    <property type="entry name" value="I40475"/>
</dbReference>
<dbReference type="RefSeq" id="NP_391577.1">
    <property type="nucleotide sequence ID" value="NC_000964.3"/>
</dbReference>
<dbReference type="RefSeq" id="WP_003244265.1">
    <property type="nucleotide sequence ID" value="NZ_OZ025638.1"/>
</dbReference>
<dbReference type="SMR" id="P39152"/>
<dbReference type="FunCoup" id="P39152">
    <property type="interactions" value="25"/>
</dbReference>
<dbReference type="STRING" id="224308.BSU36960"/>
<dbReference type="PaxDb" id="224308-BSU36960"/>
<dbReference type="EnsemblBacteria" id="CAB15713">
    <property type="protein sequence ID" value="CAB15713"/>
    <property type="gene ID" value="BSU_36960"/>
</dbReference>
<dbReference type="GeneID" id="937028"/>
<dbReference type="KEGG" id="bsu:BSU36960"/>
<dbReference type="PATRIC" id="fig|224308.179.peg.4003"/>
<dbReference type="eggNOG" id="COG1246">
    <property type="taxonomic scope" value="Bacteria"/>
</dbReference>
<dbReference type="InParanoid" id="P39152"/>
<dbReference type="OrthoDB" id="2678531at2"/>
<dbReference type="BioCyc" id="BSUB:BSU36960-MONOMER"/>
<dbReference type="Proteomes" id="UP000001570">
    <property type="component" value="Chromosome"/>
</dbReference>
<dbReference type="Gene3D" id="3.40.630.30">
    <property type="match status" value="1"/>
</dbReference>
<dbReference type="InterPro" id="IPR016181">
    <property type="entry name" value="Acyl_CoA_acyltransferase"/>
</dbReference>
<dbReference type="SUPFAM" id="SSF55729">
    <property type="entry name" value="Acyl-CoA N-acyltransferases (Nat)"/>
    <property type="match status" value="1"/>
</dbReference>
<organism>
    <name type="scientific">Bacillus subtilis (strain 168)</name>
    <dbReference type="NCBI Taxonomy" id="224308"/>
    <lineage>
        <taxon>Bacteria</taxon>
        <taxon>Bacillati</taxon>
        <taxon>Bacillota</taxon>
        <taxon>Bacilli</taxon>
        <taxon>Bacillales</taxon>
        <taxon>Bacillaceae</taxon>
        <taxon>Bacillus</taxon>
    </lineage>
</organism>
<gene>
    <name type="primary">ywlB</name>
    <name type="ordered locus">BSU36960</name>
    <name type="ORF">ipc-28d</name>
</gene>
<keyword id="KW-1185">Reference proteome</keyword>
<protein>
    <recommendedName>
        <fullName>Uncharacterized protein YwlB</fullName>
    </recommendedName>
</protein>
<proteinExistence type="predicted"/>
<reference key="1">
    <citation type="submission" date="1994-10" db="EMBL/GenBank/DDBJ databases">
        <authorList>
            <person name="Glaser P."/>
            <person name="Danchin A."/>
        </authorList>
    </citation>
    <scope>NUCLEOTIDE SEQUENCE [GENOMIC DNA]</scope>
    <source>
        <strain>168</strain>
    </source>
</reference>
<reference key="2">
    <citation type="journal article" date="1997" name="Nature">
        <title>The complete genome sequence of the Gram-positive bacterium Bacillus subtilis.</title>
        <authorList>
            <person name="Kunst F."/>
            <person name="Ogasawara N."/>
            <person name="Moszer I."/>
            <person name="Albertini A.M."/>
            <person name="Alloni G."/>
            <person name="Azevedo V."/>
            <person name="Bertero M.G."/>
            <person name="Bessieres P."/>
            <person name="Bolotin A."/>
            <person name="Borchert S."/>
            <person name="Borriss R."/>
            <person name="Boursier L."/>
            <person name="Brans A."/>
            <person name="Braun M."/>
            <person name="Brignell S.C."/>
            <person name="Bron S."/>
            <person name="Brouillet S."/>
            <person name="Bruschi C.V."/>
            <person name="Caldwell B."/>
            <person name="Capuano V."/>
            <person name="Carter N.M."/>
            <person name="Choi S.-K."/>
            <person name="Codani J.-J."/>
            <person name="Connerton I.F."/>
            <person name="Cummings N.J."/>
            <person name="Daniel R.A."/>
            <person name="Denizot F."/>
            <person name="Devine K.M."/>
            <person name="Duesterhoeft A."/>
            <person name="Ehrlich S.D."/>
            <person name="Emmerson P.T."/>
            <person name="Entian K.-D."/>
            <person name="Errington J."/>
            <person name="Fabret C."/>
            <person name="Ferrari E."/>
            <person name="Foulger D."/>
            <person name="Fritz C."/>
            <person name="Fujita M."/>
            <person name="Fujita Y."/>
            <person name="Fuma S."/>
            <person name="Galizzi A."/>
            <person name="Galleron N."/>
            <person name="Ghim S.-Y."/>
            <person name="Glaser P."/>
            <person name="Goffeau A."/>
            <person name="Golightly E.J."/>
            <person name="Grandi G."/>
            <person name="Guiseppi G."/>
            <person name="Guy B.J."/>
            <person name="Haga K."/>
            <person name="Haiech J."/>
            <person name="Harwood C.R."/>
            <person name="Henaut A."/>
            <person name="Hilbert H."/>
            <person name="Holsappel S."/>
            <person name="Hosono S."/>
            <person name="Hullo M.-F."/>
            <person name="Itaya M."/>
            <person name="Jones L.-M."/>
            <person name="Joris B."/>
            <person name="Karamata D."/>
            <person name="Kasahara Y."/>
            <person name="Klaerr-Blanchard M."/>
            <person name="Klein C."/>
            <person name="Kobayashi Y."/>
            <person name="Koetter P."/>
            <person name="Koningstein G."/>
            <person name="Krogh S."/>
            <person name="Kumano M."/>
            <person name="Kurita K."/>
            <person name="Lapidus A."/>
            <person name="Lardinois S."/>
            <person name="Lauber J."/>
            <person name="Lazarevic V."/>
            <person name="Lee S.-M."/>
            <person name="Levine A."/>
            <person name="Liu H."/>
            <person name="Masuda S."/>
            <person name="Mauel C."/>
            <person name="Medigue C."/>
            <person name="Medina N."/>
            <person name="Mellado R.P."/>
            <person name="Mizuno M."/>
            <person name="Moestl D."/>
            <person name="Nakai S."/>
            <person name="Noback M."/>
            <person name="Noone D."/>
            <person name="O'Reilly M."/>
            <person name="Ogawa K."/>
            <person name="Ogiwara A."/>
            <person name="Oudega B."/>
            <person name="Park S.-H."/>
            <person name="Parro V."/>
            <person name="Pohl T.M."/>
            <person name="Portetelle D."/>
            <person name="Porwollik S."/>
            <person name="Prescott A.M."/>
            <person name="Presecan E."/>
            <person name="Pujic P."/>
            <person name="Purnelle B."/>
            <person name="Rapoport G."/>
            <person name="Rey M."/>
            <person name="Reynolds S."/>
            <person name="Rieger M."/>
            <person name="Rivolta C."/>
            <person name="Rocha E."/>
            <person name="Roche B."/>
            <person name="Rose M."/>
            <person name="Sadaie Y."/>
            <person name="Sato T."/>
            <person name="Scanlan E."/>
            <person name="Schleich S."/>
            <person name="Schroeter R."/>
            <person name="Scoffone F."/>
            <person name="Sekiguchi J."/>
            <person name="Sekowska A."/>
            <person name="Seror S.J."/>
            <person name="Serror P."/>
            <person name="Shin B.-S."/>
            <person name="Soldo B."/>
            <person name="Sorokin A."/>
            <person name="Tacconi E."/>
            <person name="Takagi T."/>
            <person name="Takahashi H."/>
            <person name="Takemaru K."/>
            <person name="Takeuchi M."/>
            <person name="Tamakoshi A."/>
            <person name="Tanaka T."/>
            <person name="Terpstra P."/>
            <person name="Tognoni A."/>
            <person name="Tosato V."/>
            <person name="Uchiyama S."/>
            <person name="Vandenbol M."/>
            <person name="Vannier F."/>
            <person name="Vassarotti A."/>
            <person name="Viari A."/>
            <person name="Wambutt R."/>
            <person name="Wedler E."/>
            <person name="Wedler H."/>
            <person name="Weitzenegger T."/>
            <person name="Winters P."/>
            <person name="Wipat A."/>
            <person name="Yamamoto H."/>
            <person name="Yamane K."/>
            <person name="Yasumoto K."/>
            <person name="Yata K."/>
            <person name="Yoshida K."/>
            <person name="Yoshikawa H.-F."/>
            <person name="Zumstein E."/>
            <person name="Yoshikawa H."/>
            <person name="Danchin A."/>
        </authorList>
    </citation>
    <scope>NUCLEOTIDE SEQUENCE [LARGE SCALE GENOMIC DNA]</scope>
    <source>
        <strain>168</strain>
    </source>
</reference>
<accession>P39152</accession>
<feature type="chain" id="PRO_0000049983" description="Uncharacterized protein YwlB">
    <location>
        <begin position="1"/>
        <end position="147"/>
    </location>
</feature>
<sequence length="147" mass="16499">MFYQLRVAREKDGDVLEAFLKQAKTSYEGVKEGFTQFLMLEDSEKNIAGCLGIEKISCDQGLLRSLVISDKLHQGHIVTLFQSMEVLCEKHQIKTVYLVANQHSSADFLTAMGFERAESVPEELFSSDHFCESRQTEGAVLMKKASG</sequence>